<keyword id="KW-0007">Acetylation</keyword>
<keyword id="KW-0963">Cytoplasm</keyword>
<keyword id="KW-0903">Direct protein sequencing</keyword>
<keyword id="KW-0342">GTP-binding</keyword>
<keyword id="KW-0396">Initiation factor</keyword>
<keyword id="KW-0547">Nucleotide-binding</keyword>
<keyword id="KW-0648">Protein biosynthesis</keyword>
<keyword id="KW-1185">Reference proteome</keyword>
<organism>
    <name type="scientific">Oryctolagus cuniculus</name>
    <name type="common">Rabbit</name>
    <dbReference type="NCBI Taxonomy" id="9986"/>
    <lineage>
        <taxon>Eukaryota</taxon>
        <taxon>Metazoa</taxon>
        <taxon>Chordata</taxon>
        <taxon>Craniata</taxon>
        <taxon>Vertebrata</taxon>
        <taxon>Euteleostomi</taxon>
        <taxon>Mammalia</taxon>
        <taxon>Eutheria</taxon>
        <taxon>Euarchontoglires</taxon>
        <taxon>Glires</taxon>
        <taxon>Lagomorpha</taxon>
        <taxon>Leporidae</taxon>
        <taxon>Oryctolagus</taxon>
    </lineage>
</organism>
<evidence type="ECO:0000250" key="1"/>
<evidence type="ECO:0000250" key="2">
    <source>
        <dbReference type="UniProtKB" id="P05198"/>
    </source>
</evidence>
<evidence type="ECO:0000250" key="3">
    <source>
        <dbReference type="UniProtKB" id="P41091"/>
    </source>
</evidence>
<evidence type="ECO:0000250" key="4">
    <source>
        <dbReference type="UniProtKB" id="Q09130"/>
    </source>
</evidence>
<evidence type="ECO:0000255" key="5">
    <source>
        <dbReference type="PROSITE-ProRule" id="PRU01059"/>
    </source>
</evidence>
<evidence type="ECO:0000305" key="6"/>
<accession>P33887</accession>
<accession>Q9TRV8</accession>
<accession>Q9TRV9</accession>
<accession>Q9TRW0</accession>
<name>IF2G_RABIT</name>
<dbReference type="STRING" id="9986.ENSOCUP00000028398"/>
<dbReference type="InParanoid" id="P33887"/>
<dbReference type="Proteomes" id="UP000001811">
    <property type="component" value="Unplaced"/>
</dbReference>
<dbReference type="GO" id="GO:0005829">
    <property type="term" value="C:cytosol"/>
    <property type="evidence" value="ECO:0007669"/>
    <property type="project" value="UniProtKB-SubCell"/>
</dbReference>
<dbReference type="GO" id="GO:0005850">
    <property type="term" value="C:eukaryotic translation initiation factor 2 complex"/>
    <property type="evidence" value="ECO:0000250"/>
    <property type="project" value="UniProtKB"/>
</dbReference>
<dbReference type="GO" id="GO:0005525">
    <property type="term" value="F:GTP binding"/>
    <property type="evidence" value="ECO:0000303"/>
    <property type="project" value="UniProtKB"/>
</dbReference>
<dbReference type="GO" id="GO:1990856">
    <property type="term" value="F:methionyl-initiator methionine tRNA binding"/>
    <property type="evidence" value="ECO:0000250"/>
    <property type="project" value="UniProtKB"/>
</dbReference>
<dbReference type="GO" id="GO:0003743">
    <property type="term" value="F:translation initiation factor activity"/>
    <property type="evidence" value="ECO:0000303"/>
    <property type="project" value="UniProtKB"/>
</dbReference>
<dbReference type="GO" id="GO:0002183">
    <property type="term" value="P:cytoplasmic translational initiation"/>
    <property type="evidence" value="ECO:0000250"/>
    <property type="project" value="UniProtKB"/>
</dbReference>
<dbReference type="GO" id="GO:0001731">
    <property type="term" value="P:formation of translation preinitiation complex"/>
    <property type="evidence" value="ECO:0007669"/>
    <property type="project" value="TreeGrafter"/>
</dbReference>
<dbReference type="GO" id="GO:0006413">
    <property type="term" value="P:translational initiation"/>
    <property type="evidence" value="ECO:0000303"/>
    <property type="project" value="UniProtKB"/>
</dbReference>
<dbReference type="Gene3D" id="2.40.30.10">
    <property type="entry name" value="Translation factors"/>
    <property type="match status" value="1"/>
</dbReference>
<dbReference type="InterPro" id="IPR050543">
    <property type="entry name" value="eIF2G"/>
</dbReference>
<dbReference type="InterPro" id="IPR015256">
    <property type="entry name" value="eIF2g_C"/>
</dbReference>
<dbReference type="InterPro" id="IPR009001">
    <property type="entry name" value="Transl_elong_EF1A/Init_IF2_C"/>
</dbReference>
<dbReference type="PANTHER" id="PTHR42854">
    <property type="entry name" value="EUKARYOTIC TRANSLATION INITIATION FACTOR 2 SUBUNIT 3 FAMILY MEMBER"/>
    <property type="match status" value="1"/>
</dbReference>
<dbReference type="PANTHER" id="PTHR42854:SF3">
    <property type="entry name" value="EUKARYOTIC TRANSLATION INITIATION FACTOR 2 SUBUNIT 3-RELATED"/>
    <property type="match status" value="1"/>
</dbReference>
<dbReference type="Pfam" id="PF09173">
    <property type="entry name" value="eIF2_C"/>
    <property type="match status" value="1"/>
</dbReference>
<dbReference type="SUPFAM" id="SSF50465">
    <property type="entry name" value="EF-Tu/eEF-1alpha/eIF2-gamma C-terminal domain"/>
    <property type="match status" value="1"/>
</dbReference>
<feature type="chain" id="PRO_0000137442" description="Eukaryotic translation initiation factor 2 subunit 3">
    <location>
        <begin position="1"/>
        <end position="152" status="greater than"/>
    </location>
</feature>
<feature type="binding site" evidence="1">
    <location>
        <begin position="51"/>
        <end position="54"/>
    </location>
    <ligand>
        <name>GTP</name>
        <dbReference type="ChEBI" id="CHEBI:37565"/>
    </ligand>
</feature>
<feature type="modified residue" description="N-acetylalanine" evidence="3">
    <location>
        <position position="1"/>
    </location>
</feature>
<feature type="unsure residue">
    <location>
        <position position="20"/>
    </location>
</feature>
<feature type="sequence conflict" description="In Ref. 1; AA sequence." evidence="6" ref="1">
    <original>G</original>
    <variation>T</variation>
    <location>
        <position position="3"/>
    </location>
</feature>
<feature type="sequence conflict" description="In Ref. 2; AA sequence." evidence="6" ref="2">
    <original>Q</original>
    <variation>W</variation>
    <location>
        <position position="112"/>
    </location>
</feature>
<feature type="non-consecutive residues" evidence="6">
    <location>
        <begin position="22"/>
        <end position="23"/>
    </location>
</feature>
<feature type="non-consecutive residues" evidence="6">
    <location>
        <begin position="29"/>
        <end position="30"/>
    </location>
</feature>
<feature type="non-consecutive residues" evidence="6">
    <location>
        <begin position="41"/>
        <end position="42"/>
    </location>
</feature>
<feature type="non-consecutive residues" evidence="6">
    <location>
        <begin position="81"/>
        <end position="82"/>
    </location>
</feature>
<feature type="non-consecutive residues" evidence="6">
    <location>
        <begin position="101"/>
        <end position="102"/>
    </location>
</feature>
<feature type="non-consecutive residues" evidence="6">
    <location>
        <begin position="137"/>
        <end position="138"/>
    </location>
</feature>
<feature type="non-terminal residue">
    <location>
        <position position="152"/>
    </location>
</feature>
<comment type="function">
    <text evidence="2">Member of the eIF2 complex that functions in the early steps of protein synthesis by forming a ternary complex with GTP and initiator tRNA. This complex binds to a 40S ribosomal subunit, followed by mRNA binding to form the 43S pre-initiation complex (43S PIC). Junction of the 60S ribosomal subunit to form the 80S initiation complex is preceded by hydrolysis of the GTP bound to eIF2 and release of an eIF2-GDP binary complex. In order for eIF2 to recycle and catalyze another round of initiation, the GDP bound to eIF2 must exchange with GTP by way of a reaction catalyzed by eIF-2B (By similarity).</text>
</comment>
<comment type="subunit">
    <text evidence="3">Eukaryotic translation initiation factor 2 eIF2 is a heterotrimeric complex composed of an alpha (EIF2S1), a beta (EIF2S2) and a gamma (EIF2S3) chain. eIF2 is member of the 43S pre-initiation complex (43S PIC). Interacts (via C-terminus) with CDC123; the interaction is direct.</text>
</comment>
<comment type="subcellular location">
    <subcellularLocation>
        <location evidence="4">Cytoplasm</location>
        <location evidence="4">Cytosol</location>
    </subcellularLocation>
</comment>
<comment type="similarity">
    <text evidence="5">Belongs to the TRAFAC class translation factor GTPase superfamily. Classic translation factor GTPase family. EIF2G subfamily.</text>
</comment>
<reference key="1">
    <citation type="journal article" date="1986" name="J. Biol. Chem.">
        <title>The NH2-terminal sequence of the alpha and gamma subunits of eukaryotic initiation factor 2 and the phosphorylation site for the heme-regulated eIF-2 alpha kinase.</title>
        <authorList>
            <person name="Wettenhall R.E.H."/>
            <person name="Kudlicki W."/>
            <person name="Kramer G."/>
            <person name="Hardesty B."/>
        </authorList>
    </citation>
    <scope>PROTEIN SEQUENCE OF 1-22</scope>
    <source>
        <tissue>Reticulocyte</tissue>
    </source>
</reference>
<reference key="2">
    <citation type="journal article" date="1991" name="Biochim. Biophys. Acta">
        <title>Amino acid sequence analysis of the beta- and gamma-subunits of eukaryotic initiation factor eIF-2. Identification of regions interacting with GTP.</title>
        <authorList>
            <person name="Bommer U.-A."/>
            <person name="Kraft R."/>
            <person name="Kurzchalia T.V."/>
            <person name="Price N.T."/>
            <person name="Proud C.G."/>
        </authorList>
    </citation>
    <scope>PROTEIN SEQUENCE OF 1-15 AND 82-126</scope>
    <source>
        <tissue>Reticulocyte</tissue>
    </source>
</reference>
<reference key="3">
    <citation type="journal article" date="1987" name="Arch. Biochem. Biophys.">
        <title>The purification and characterization of subunits alpha, beta, and gamma from the rabbit reticulocyte eukaryotic initiation factor 2.</title>
        <authorList>
            <person name="Schafer M.P."/>
            <person name="Fairwell T."/>
            <person name="Parker D.S."/>
            <person name="Knight M."/>
            <person name="Anderson W.F."/>
            <person name="Safer B."/>
        </authorList>
    </citation>
    <scope>PROTEIN SEQUENCE OF 1-8</scope>
    <source>
        <tissue>Reticulocyte</tissue>
    </source>
</reference>
<reference key="4">
    <citation type="journal article" date="1993" name="Mol. Cell. Biol.">
        <title>GCD11, a negative regulator of GCN4 expression, encodes the gamma subunit of eIF-2 in Saccharomyces cerevisiae.</title>
        <authorList>
            <person name="Hannig E.M."/>
            <person name="Cigan A.M."/>
            <person name="Freeman B.A."/>
            <person name="Kinzy T.G."/>
        </authorList>
    </citation>
    <scope>PROTEIN SEQUENCE OF 23-99 AND 102-152</scope>
</reference>
<protein>
    <recommendedName>
        <fullName>Eukaryotic translation initiation factor 2 subunit 3</fullName>
    </recommendedName>
    <alternativeName>
        <fullName>Eukaryotic translation initiation factor 2 subunit gamma</fullName>
        <shortName>eIF2-gamma</shortName>
    </alternativeName>
</protein>
<sequence length="152" mass="16014">AGGEAGVTLGQPSLVEQDSHSGFKNELERDGGLLLIAGNESKLKHILILGNKIDLVKESQAKEQYGQILAFVQETVAXGATVGQVLGAVGALPEIFTELXIVNIGSLSTGGQVSAVKADLGKIVLTNPVXTEVGEEKSVEKHWRLIGWGQIR</sequence>
<proteinExistence type="evidence at protein level"/>
<gene>
    <name type="primary">EIF2S3</name>
    <name type="synonym">EIF2G</name>
</gene>